<sequence length="146" mass="16150">MGFLRRLIYRRRPMIYVESSEESSDEQPDEVESPTQSQDSTPAEEREDEGASAAQGQEPEADSQELVQPKTGCELGDGPDTKRVCLRNEEQMKLPAEGPEPEADSQEQVHPKTGCERGDGPDVQELGLPNPEEVKTPEEDEGQSQP</sequence>
<dbReference type="EMBL" id="AF058989">
    <property type="protein sequence ID" value="AAC25990.1"/>
    <property type="molecule type" value="mRNA"/>
</dbReference>
<dbReference type="EMBL" id="CR542084">
    <property type="protein sequence ID" value="CAG46881.1"/>
    <property type="molecule type" value="mRNA"/>
</dbReference>
<dbReference type="EMBL" id="AC231643">
    <property type="status" value="NOT_ANNOTATED_CDS"/>
    <property type="molecule type" value="Genomic_DNA"/>
</dbReference>
<dbReference type="EMBL" id="BC004861">
    <property type="protein sequence ID" value="AAH04861.1"/>
    <property type="molecule type" value="mRNA"/>
</dbReference>
<dbReference type="CCDS" id="CCDS14327.1"/>
<dbReference type="RefSeq" id="NP_003776.2">
    <property type="nucleotide sequence ID" value="NM_003785.4"/>
</dbReference>
<dbReference type="RefSeq" id="XP_011542300.1">
    <property type="nucleotide sequence ID" value="XM_011543998.3"/>
</dbReference>
<dbReference type="RefSeq" id="XP_054184013.1">
    <property type="nucleotide sequence ID" value="XM_054328038.1"/>
</dbReference>
<dbReference type="BioGRID" id="114254">
    <property type="interactions" value="95"/>
</dbReference>
<dbReference type="FunCoup" id="O75459">
    <property type="interactions" value="29"/>
</dbReference>
<dbReference type="IntAct" id="O75459">
    <property type="interactions" value="37"/>
</dbReference>
<dbReference type="STRING" id="9606.ENSP00000365320"/>
<dbReference type="GlyGen" id="O75459">
    <property type="glycosylation" value="1 site"/>
</dbReference>
<dbReference type="iPTMnet" id="O75459"/>
<dbReference type="PhosphoSitePlus" id="O75459"/>
<dbReference type="BioMuta" id="PAGE1"/>
<dbReference type="jPOST" id="O75459"/>
<dbReference type="MassIVE" id="O75459"/>
<dbReference type="PaxDb" id="9606-ENSP00000365320"/>
<dbReference type="PeptideAtlas" id="O75459"/>
<dbReference type="ProteomicsDB" id="50020"/>
<dbReference type="Pumba" id="O75459"/>
<dbReference type="Antibodypedia" id="487">
    <property type="antibodies" value="200 antibodies from 23 providers"/>
</dbReference>
<dbReference type="DNASU" id="8712"/>
<dbReference type="Ensembl" id="ENST00000376150.4">
    <property type="protein sequence ID" value="ENSP00000365320.3"/>
    <property type="gene ID" value="ENSG00000068985.5"/>
</dbReference>
<dbReference type="GeneID" id="8712"/>
<dbReference type="KEGG" id="hsa:8712"/>
<dbReference type="MANE-Select" id="ENST00000376150.4">
    <property type="protein sequence ID" value="ENSP00000365320.3"/>
    <property type="RefSeq nucleotide sequence ID" value="NM_003785.4"/>
    <property type="RefSeq protein sequence ID" value="NP_003776.2"/>
</dbReference>
<dbReference type="UCSC" id="uc004dom.4">
    <property type="organism name" value="human"/>
</dbReference>
<dbReference type="AGR" id="HGNC:4107"/>
<dbReference type="CTD" id="8712"/>
<dbReference type="DisGeNET" id="8712"/>
<dbReference type="GeneCards" id="PAGE1"/>
<dbReference type="HGNC" id="HGNC:4107">
    <property type="gene designation" value="PAGE1"/>
</dbReference>
<dbReference type="HPA" id="ENSG00000068985">
    <property type="expression patterns" value="Tissue enriched (testis)"/>
</dbReference>
<dbReference type="MIM" id="300288">
    <property type="type" value="gene"/>
</dbReference>
<dbReference type="neXtProt" id="NX_O75459"/>
<dbReference type="OpenTargets" id="ENSG00000068985"/>
<dbReference type="PharmGKB" id="PA28522"/>
<dbReference type="VEuPathDB" id="HostDB:ENSG00000068985"/>
<dbReference type="eggNOG" id="ENOG502SZ68">
    <property type="taxonomic scope" value="Eukaryota"/>
</dbReference>
<dbReference type="GeneTree" id="ENSGT00940000153097"/>
<dbReference type="HOGENOM" id="CLU_150116_0_0_1"/>
<dbReference type="InParanoid" id="O75459"/>
<dbReference type="OMA" id="MPGCEPG"/>
<dbReference type="OrthoDB" id="9539654at2759"/>
<dbReference type="PAN-GO" id="O75459">
    <property type="GO annotations" value="0 GO annotations based on evolutionary models"/>
</dbReference>
<dbReference type="PhylomeDB" id="O75459"/>
<dbReference type="TreeFam" id="TF340669"/>
<dbReference type="PathwayCommons" id="O75459"/>
<dbReference type="SignaLink" id="O75459"/>
<dbReference type="BioGRID-ORCS" id="8712">
    <property type="hits" value="18 hits in 773 CRISPR screens"/>
</dbReference>
<dbReference type="ChiTaRS" id="PAGE1">
    <property type="organism name" value="human"/>
</dbReference>
<dbReference type="GenomeRNAi" id="8712"/>
<dbReference type="Pharos" id="O75459">
    <property type="development level" value="Tbio"/>
</dbReference>
<dbReference type="PRO" id="PR:O75459"/>
<dbReference type="Proteomes" id="UP000005640">
    <property type="component" value="Chromosome X"/>
</dbReference>
<dbReference type="RNAct" id="O75459">
    <property type="molecule type" value="protein"/>
</dbReference>
<dbReference type="Bgee" id="ENSG00000068985">
    <property type="expression patterns" value="Expressed in male germ line stem cell (sensu Vertebrata) in testis and 35 other cell types or tissues"/>
</dbReference>
<dbReference type="InterPro" id="IPR031320">
    <property type="entry name" value="GAGE"/>
</dbReference>
<dbReference type="InterPro" id="IPR008625">
    <property type="entry name" value="GAGE_fam"/>
</dbReference>
<dbReference type="PANTHER" id="PTHR14047:SF3">
    <property type="entry name" value="P ANTIGEN FAMILY MEMBER 1"/>
    <property type="match status" value="1"/>
</dbReference>
<dbReference type="PANTHER" id="PTHR14047">
    <property type="entry name" value="P ANTIGEN FAMILY MEMBER 5-RELATED"/>
    <property type="match status" value="1"/>
</dbReference>
<dbReference type="Pfam" id="PF05831">
    <property type="entry name" value="GAGE"/>
    <property type="match status" value="2"/>
</dbReference>
<dbReference type="SMART" id="SM01379">
    <property type="entry name" value="GAGE"/>
    <property type="match status" value="2"/>
</dbReference>
<reference key="1">
    <citation type="journal article" date="1998" name="J. Biol. Chem.">
        <title>Isolation and characterization of PAGE-1 and GAGE-7: new genes expressed in the LNCaP prostate cancer progression model that share homology with melanoma-associated antigens.</title>
        <authorList>
            <person name="Chen M.E."/>
            <person name="Lin S.-H."/>
            <person name="Chung L.W.K."/>
            <person name="Sikes R.A."/>
        </authorList>
    </citation>
    <scope>NUCLEOTIDE SEQUENCE [MRNA]</scope>
    <scope>VARIANT PRO-75</scope>
</reference>
<reference key="2">
    <citation type="submission" date="2004-06" db="EMBL/GenBank/DDBJ databases">
        <title>Cloning of human full open reading frames in Gateway(TM) system entry vector (pDONR201).</title>
        <authorList>
            <person name="Halleck A."/>
            <person name="Ebert L."/>
            <person name="Mkoundinya M."/>
            <person name="Schick M."/>
            <person name="Eisenstein S."/>
            <person name="Neubert P."/>
            <person name="Kstrang K."/>
            <person name="Schatten R."/>
            <person name="Shen B."/>
            <person name="Henze S."/>
            <person name="Mar W."/>
            <person name="Korn B."/>
            <person name="Zuo D."/>
            <person name="Hu Y."/>
            <person name="LaBaer J."/>
        </authorList>
    </citation>
    <scope>NUCLEOTIDE SEQUENCE [LARGE SCALE MRNA]</scope>
</reference>
<reference key="3">
    <citation type="journal article" date="2005" name="Nature">
        <title>The DNA sequence of the human X chromosome.</title>
        <authorList>
            <person name="Ross M.T."/>
            <person name="Grafham D.V."/>
            <person name="Coffey A.J."/>
            <person name="Scherer S."/>
            <person name="McLay K."/>
            <person name="Muzny D."/>
            <person name="Platzer M."/>
            <person name="Howell G.R."/>
            <person name="Burrows C."/>
            <person name="Bird C.P."/>
            <person name="Frankish A."/>
            <person name="Lovell F.L."/>
            <person name="Howe K.L."/>
            <person name="Ashurst J.L."/>
            <person name="Fulton R.S."/>
            <person name="Sudbrak R."/>
            <person name="Wen G."/>
            <person name="Jones M.C."/>
            <person name="Hurles M.E."/>
            <person name="Andrews T.D."/>
            <person name="Scott C.E."/>
            <person name="Searle S."/>
            <person name="Ramser J."/>
            <person name="Whittaker A."/>
            <person name="Deadman R."/>
            <person name="Carter N.P."/>
            <person name="Hunt S.E."/>
            <person name="Chen R."/>
            <person name="Cree A."/>
            <person name="Gunaratne P."/>
            <person name="Havlak P."/>
            <person name="Hodgson A."/>
            <person name="Metzker M.L."/>
            <person name="Richards S."/>
            <person name="Scott G."/>
            <person name="Steffen D."/>
            <person name="Sodergren E."/>
            <person name="Wheeler D.A."/>
            <person name="Worley K.C."/>
            <person name="Ainscough R."/>
            <person name="Ambrose K.D."/>
            <person name="Ansari-Lari M.A."/>
            <person name="Aradhya S."/>
            <person name="Ashwell R.I."/>
            <person name="Babbage A.K."/>
            <person name="Bagguley C.L."/>
            <person name="Ballabio A."/>
            <person name="Banerjee R."/>
            <person name="Barker G.E."/>
            <person name="Barlow K.F."/>
            <person name="Barrett I.P."/>
            <person name="Bates K.N."/>
            <person name="Beare D.M."/>
            <person name="Beasley H."/>
            <person name="Beasley O."/>
            <person name="Beck A."/>
            <person name="Bethel G."/>
            <person name="Blechschmidt K."/>
            <person name="Brady N."/>
            <person name="Bray-Allen S."/>
            <person name="Bridgeman A.M."/>
            <person name="Brown A.J."/>
            <person name="Brown M.J."/>
            <person name="Bonnin D."/>
            <person name="Bruford E.A."/>
            <person name="Buhay C."/>
            <person name="Burch P."/>
            <person name="Burford D."/>
            <person name="Burgess J."/>
            <person name="Burrill W."/>
            <person name="Burton J."/>
            <person name="Bye J.M."/>
            <person name="Carder C."/>
            <person name="Carrel L."/>
            <person name="Chako J."/>
            <person name="Chapman J.C."/>
            <person name="Chavez D."/>
            <person name="Chen E."/>
            <person name="Chen G."/>
            <person name="Chen Y."/>
            <person name="Chen Z."/>
            <person name="Chinault C."/>
            <person name="Ciccodicola A."/>
            <person name="Clark S.Y."/>
            <person name="Clarke G."/>
            <person name="Clee C.M."/>
            <person name="Clegg S."/>
            <person name="Clerc-Blankenburg K."/>
            <person name="Clifford K."/>
            <person name="Cobley V."/>
            <person name="Cole C.G."/>
            <person name="Conquer J.S."/>
            <person name="Corby N."/>
            <person name="Connor R.E."/>
            <person name="David R."/>
            <person name="Davies J."/>
            <person name="Davis C."/>
            <person name="Davis J."/>
            <person name="Delgado O."/>
            <person name="Deshazo D."/>
            <person name="Dhami P."/>
            <person name="Ding Y."/>
            <person name="Dinh H."/>
            <person name="Dodsworth S."/>
            <person name="Draper H."/>
            <person name="Dugan-Rocha S."/>
            <person name="Dunham A."/>
            <person name="Dunn M."/>
            <person name="Durbin K.J."/>
            <person name="Dutta I."/>
            <person name="Eades T."/>
            <person name="Ellwood M."/>
            <person name="Emery-Cohen A."/>
            <person name="Errington H."/>
            <person name="Evans K.L."/>
            <person name="Faulkner L."/>
            <person name="Francis F."/>
            <person name="Frankland J."/>
            <person name="Fraser A.E."/>
            <person name="Galgoczy P."/>
            <person name="Gilbert J."/>
            <person name="Gill R."/>
            <person name="Gloeckner G."/>
            <person name="Gregory S.G."/>
            <person name="Gribble S."/>
            <person name="Griffiths C."/>
            <person name="Grocock R."/>
            <person name="Gu Y."/>
            <person name="Gwilliam R."/>
            <person name="Hamilton C."/>
            <person name="Hart E.A."/>
            <person name="Hawes A."/>
            <person name="Heath P.D."/>
            <person name="Heitmann K."/>
            <person name="Hennig S."/>
            <person name="Hernandez J."/>
            <person name="Hinzmann B."/>
            <person name="Ho S."/>
            <person name="Hoffs M."/>
            <person name="Howden P.J."/>
            <person name="Huckle E.J."/>
            <person name="Hume J."/>
            <person name="Hunt P.J."/>
            <person name="Hunt A.R."/>
            <person name="Isherwood J."/>
            <person name="Jacob L."/>
            <person name="Johnson D."/>
            <person name="Jones S."/>
            <person name="de Jong P.J."/>
            <person name="Joseph S.S."/>
            <person name="Keenan S."/>
            <person name="Kelly S."/>
            <person name="Kershaw J.K."/>
            <person name="Khan Z."/>
            <person name="Kioschis P."/>
            <person name="Klages S."/>
            <person name="Knights A.J."/>
            <person name="Kosiura A."/>
            <person name="Kovar-Smith C."/>
            <person name="Laird G.K."/>
            <person name="Langford C."/>
            <person name="Lawlor S."/>
            <person name="Leversha M."/>
            <person name="Lewis L."/>
            <person name="Liu W."/>
            <person name="Lloyd C."/>
            <person name="Lloyd D.M."/>
            <person name="Loulseged H."/>
            <person name="Loveland J.E."/>
            <person name="Lovell J.D."/>
            <person name="Lozado R."/>
            <person name="Lu J."/>
            <person name="Lyne R."/>
            <person name="Ma J."/>
            <person name="Maheshwari M."/>
            <person name="Matthews L.H."/>
            <person name="McDowall J."/>
            <person name="McLaren S."/>
            <person name="McMurray A."/>
            <person name="Meidl P."/>
            <person name="Meitinger T."/>
            <person name="Milne S."/>
            <person name="Miner G."/>
            <person name="Mistry S.L."/>
            <person name="Morgan M."/>
            <person name="Morris S."/>
            <person name="Mueller I."/>
            <person name="Mullikin J.C."/>
            <person name="Nguyen N."/>
            <person name="Nordsiek G."/>
            <person name="Nyakatura G."/>
            <person name="O'dell C.N."/>
            <person name="Okwuonu G."/>
            <person name="Palmer S."/>
            <person name="Pandian R."/>
            <person name="Parker D."/>
            <person name="Parrish J."/>
            <person name="Pasternak S."/>
            <person name="Patel D."/>
            <person name="Pearce A.V."/>
            <person name="Pearson D.M."/>
            <person name="Pelan S.E."/>
            <person name="Perez L."/>
            <person name="Porter K.M."/>
            <person name="Ramsey Y."/>
            <person name="Reichwald K."/>
            <person name="Rhodes S."/>
            <person name="Ridler K.A."/>
            <person name="Schlessinger D."/>
            <person name="Schueler M.G."/>
            <person name="Sehra H.K."/>
            <person name="Shaw-Smith C."/>
            <person name="Shen H."/>
            <person name="Sheridan E.M."/>
            <person name="Shownkeen R."/>
            <person name="Skuce C.D."/>
            <person name="Smith M.L."/>
            <person name="Sotheran E.C."/>
            <person name="Steingruber H.E."/>
            <person name="Steward C.A."/>
            <person name="Storey R."/>
            <person name="Swann R.M."/>
            <person name="Swarbreck D."/>
            <person name="Tabor P.E."/>
            <person name="Taudien S."/>
            <person name="Taylor T."/>
            <person name="Teague B."/>
            <person name="Thomas K."/>
            <person name="Thorpe A."/>
            <person name="Timms K."/>
            <person name="Tracey A."/>
            <person name="Trevanion S."/>
            <person name="Tromans A.C."/>
            <person name="d'Urso M."/>
            <person name="Verduzco D."/>
            <person name="Villasana D."/>
            <person name="Waldron L."/>
            <person name="Wall M."/>
            <person name="Wang Q."/>
            <person name="Warren J."/>
            <person name="Warry G.L."/>
            <person name="Wei X."/>
            <person name="West A."/>
            <person name="Whitehead S.L."/>
            <person name="Whiteley M.N."/>
            <person name="Wilkinson J.E."/>
            <person name="Willey D.L."/>
            <person name="Williams G."/>
            <person name="Williams L."/>
            <person name="Williamson A."/>
            <person name="Williamson H."/>
            <person name="Wilming L."/>
            <person name="Woodmansey R.L."/>
            <person name="Wray P.W."/>
            <person name="Yen J."/>
            <person name="Zhang J."/>
            <person name="Zhou J."/>
            <person name="Zoghbi H."/>
            <person name="Zorilla S."/>
            <person name="Buck D."/>
            <person name="Reinhardt R."/>
            <person name="Poustka A."/>
            <person name="Rosenthal A."/>
            <person name="Lehrach H."/>
            <person name="Meindl A."/>
            <person name="Minx P.J."/>
            <person name="Hillier L.W."/>
            <person name="Willard H.F."/>
            <person name="Wilson R.K."/>
            <person name="Waterston R.H."/>
            <person name="Rice C.M."/>
            <person name="Vaudin M."/>
            <person name="Coulson A."/>
            <person name="Nelson D.L."/>
            <person name="Weinstock G."/>
            <person name="Sulston J.E."/>
            <person name="Durbin R.M."/>
            <person name="Hubbard T."/>
            <person name="Gibbs R.A."/>
            <person name="Beck S."/>
            <person name="Rogers J."/>
            <person name="Bentley D.R."/>
        </authorList>
    </citation>
    <scope>NUCLEOTIDE SEQUENCE [LARGE SCALE GENOMIC DNA]</scope>
</reference>
<reference key="4">
    <citation type="journal article" date="2004" name="Genome Res.">
        <title>The status, quality, and expansion of the NIH full-length cDNA project: the Mammalian Gene Collection (MGC).</title>
        <authorList>
            <consortium name="The MGC Project Team"/>
        </authorList>
    </citation>
    <scope>NUCLEOTIDE SEQUENCE [LARGE SCALE MRNA]</scope>
    <source>
        <tissue>Skin</tissue>
    </source>
</reference>
<reference key="5">
    <citation type="journal article" date="2008" name="Proc. Natl. Acad. Sci. U.S.A.">
        <title>A quantitative atlas of mitotic phosphorylation.</title>
        <authorList>
            <person name="Dephoure N."/>
            <person name="Zhou C."/>
            <person name="Villen J."/>
            <person name="Beausoleil S.A."/>
            <person name="Bakalarski C.E."/>
            <person name="Elledge S.J."/>
            <person name="Gygi S.P."/>
        </authorList>
    </citation>
    <scope>PHOSPHORYLATION [LARGE SCALE ANALYSIS] AT SER-63 AND SER-144</scope>
    <scope>IDENTIFICATION BY MASS SPECTROMETRY [LARGE SCALE ANALYSIS]</scope>
    <source>
        <tissue>Cervix carcinoma</tissue>
    </source>
</reference>
<reference key="6">
    <citation type="journal article" date="2008" name="Tissue Antigens">
        <title>An overview of the GAGE cancer/testis antigen family with the inclusion of newly identified members.</title>
        <authorList>
            <person name="Gjerstorff M.F."/>
            <person name="Ditzel H.J."/>
        </authorList>
    </citation>
    <scope>GAGE FAMILY</scope>
</reference>
<reference key="7">
    <citation type="journal article" date="2013" name="J. Proteome Res.">
        <title>Toward a comprehensive characterization of a human cancer cell phosphoproteome.</title>
        <authorList>
            <person name="Zhou H."/>
            <person name="Di Palma S."/>
            <person name="Preisinger C."/>
            <person name="Peng M."/>
            <person name="Polat A.N."/>
            <person name="Heck A.J."/>
            <person name="Mohammed S."/>
        </authorList>
    </citation>
    <scope>PHOSPHORYLATION [LARGE SCALE ANALYSIS] AT SER-63 AND SER-105</scope>
    <scope>IDENTIFICATION BY MASS SPECTROMETRY [LARGE SCALE ANALYSIS]</scope>
    <source>
        <tissue>Erythroleukemia</tissue>
    </source>
</reference>
<protein>
    <recommendedName>
        <fullName>P antigen family member 1</fullName>
        <shortName>PAGE-1</shortName>
    </recommendedName>
    <alternativeName>
        <fullName>AL5</fullName>
    </alternativeName>
    <alternativeName>
        <fullName>G antigen 9</fullName>
        <shortName>GAGE-9</shortName>
    </alternativeName>
    <alternativeName>
        <fullName>G antigen family B member 1</fullName>
    </alternativeName>
    <alternativeName>
        <fullName>Prostate-associated gene 1 protein</fullName>
    </alternativeName>
</protein>
<evidence type="ECO:0000256" key="1">
    <source>
        <dbReference type="SAM" id="MobiDB-lite"/>
    </source>
</evidence>
<evidence type="ECO:0000269" key="2">
    <source>
    </source>
</evidence>
<evidence type="ECO:0000305" key="3"/>
<evidence type="ECO:0007744" key="4">
    <source>
    </source>
</evidence>
<evidence type="ECO:0007744" key="5">
    <source>
    </source>
</evidence>
<organism>
    <name type="scientific">Homo sapiens</name>
    <name type="common">Human</name>
    <dbReference type="NCBI Taxonomy" id="9606"/>
    <lineage>
        <taxon>Eukaryota</taxon>
        <taxon>Metazoa</taxon>
        <taxon>Chordata</taxon>
        <taxon>Craniata</taxon>
        <taxon>Vertebrata</taxon>
        <taxon>Euteleostomi</taxon>
        <taxon>Mammalia</taxon>
        <taxon>Eutheria</taxon>
        <taxon>Euarchontoglires</taxon>
        <taxon>Primates</taxon>
        <taxon>Haplorrhini</taxon>
        <taxon>Catarrhini</taxon>
        <taxon>Hominidae</taxon>
        <taxon>Homo</taxon>
    </lineage>
</organism>
<accession>O75459</accession>
<accession>Q6FGM3</accession>
<accession>Q9BSS7</accession>
<proteinExistence type="evidence at protein level"/>
<feature type="chain" id="PRO_0000148347" description="P antigen family member 1">
    <location>
        <begin position="1"/>
        <end position="146"/>
    </location>
</feature>
<feature type="region of interest" description="Disordered" evidence="1">
    <location>
        <begin position="16"/>
        <end position="146"/>
    </location>
</feature>
<feature type="compositionally biased region" description="Acidic residues" evidence="1">
    <location>
        <begin position="19"/>
        <end position="32"/>
    </location>
</feature>
<feature type="compositionally biased region" description="Basic and acidic residues" evidence="1">
    <location>
        <begin position="79"/>
        <end position="92"/>
    </location>
</feature>
<feature type="compositionally biased region" description="Basic and acidic residues" evidence="1">
    <location>
        <begin position="107"/>
        <end position="120"/>
    </location>
</feature>
<feature type="modified residue" description="Phosphoserine" evidence="4 5">
    <location>
        <position position="63"/>
    </location>
</feature>
<feature type="modified residue" description="Phosphoserine" evidence="5">
    <location>
        <position position="105"/>
    </location>
</feature>
<feature type="modified residue" description="Phosphoserine" evidence="4">
    <location>
        <position position="144"/>
    </location>
</feature>
<feature type="sequence variant" id="VAR_027767" description="In dbSNP:rs1055197." evidence="2">
    <original>L</original>
    <variation>P</variation>
    <location>
        <position position="75"/>
    </location>
</feature>
<gene>
    <name type="primary">PAGE1</name>
    <name type="synonym">GAGE9</name>
    <name type="synonym">GAGEB1</name>
</gene>
<comment type="interaction">
    <interactant intactId="EBI-2559100">
        <id>O75459</id>
    </interactant>
    <interactant intactId="EBI-2807956">
        <id>Q96FZ5</id>
        <label>CMTM7</label>
    </interactant>
    <organismsDiffer>false</organismsDiffer>
    <experiments>3</experiments>
</comment>
<comment type="interaction">
    <interactant intactId="EBI-2559100">
        <id>O75459</id>
    </interactant>
    <interactant intactId="EBI-719274">
        <id>Q9Y6V7</id>
        <label>DDX49</label>
    </interactant>
    <organismsDiffer>false</organismsDiffer>
    <experiments>4</experiments>
</comment>
<comment type="interaction">
    <interactant intactId="EBI-2559100">
        <id>O75459</id>
    </interactant>
    <interactant intactId="EBI-10175124">
        <id>Q8IZU0</id>
        <label>FAM9B</label>
    </interactant>
    <organismsDiffer>false</organismsDiffer>
    <experiments>3</experiments>
</comment>
<comment type="interaction">
    <interactant intactId="EBI-2559100">
        <id>O75459</id>
    </interactant>
    <interactant intactId="EBI-724754">
        <id>O14880</id>
        <label>MGST3</label>
    </interactant>
    <organismsDiffer>false</organismsDiffer>
    <experiments>3</experiments>
</comment>
<comment type="interaction">
    <interactant intactId="EBI-2559100">
        <id>O75459</id>
    </interactant>
    <interactant intactId="EBI-10485931">
        <id>Q5VZY2</id>
        <label>PLPP4</label>
    </interactant>
    <organismsDiffer>false</organismsDiffer>
    <experiments>3</experiments>
</comment>
<comment type="interaction">
    <interactant intactId="EBI-2559100">
        <id>O75459</id>
    </interactant>
    <interactant intactId="EBI-745376">
        <id>P43005</id>
        <label>SLC1A1</label>
    </interactant>
    <organismsDiffer>false</organismsDiffer>
    <experiments>3</experiments>
</comment>
<comment type="interaction">
    <interactant intactId="EBI-2559100">
        <id>O75459</id>
    </interactant>
    <interactant intactId="EBI-2825135">
        <id>P22732</id>
        <label>SLC2A5</label>
    </interactant>
    <organismsDiffer>false</organismsDiffer>
    <experiments>3</experiments>
</comment>
<comment type="interaction">
    <interactant intactId="EBI-2559100">
        <id>O75459</id>
    </interactant>
    <interactant intactId="EBI-355727">
        <id>P02786</id>
        <label>TFRC</label>
    </interactant>
    <organismsDiffer>false</organismsDiffer>
    <experiments>3</experiments>
</comment>
<comment type="interaction">
    <interactant intactId="EBI-2559100">
        <id>O75459</id>
    </interactant>
    <interactant intactId="EBI-8638294">
        <id>Q9NUH8</id>
        <label>TMEM14B</label>
    </interactant>
    <organismsDiffer>false</organismsDiffer>
    <experiments>3</experiments>
</comment>
<comment type="interaction">
    <interactant intactId="EBI-2559100">
        <id>O75459</id>
    </interactant>
    <interactant intactId="EBI-11956809">
        <id>Q8TBM7</id>
        <label>TMEM254</label>
    </interactant>
    <organismsDiffer>false</organismsDiffer>
    <experiments>3</experiments>
</comment>
<comment type="interaction">
    <interactant intactId="EBI-2559100">
        <id>O75459</id>
    </interactant>
    <interactant intactId="EBI-2852148">
        <id>Q9H2L4</id>
        <label>TMEM60</label>
    </interactant>
    <organismsDiffer>false</organismsDiffer>
    <experiments>3</experiments>
</comment>
<comment type="interaction">
    <interactant intactId="EBI-2559100">
        <id>O75459</id>
    </interactant>
    <interactant intactId="EBI-359977">
        <id>P01375</id>
        <label>TNF</label>
    </interactant>
    <organismsDiffer>false</organismsDiffer>
    <experiments>3</experiments>
</comment>
<comment type="tissue specificity">
    <text>Isolated from prostate cancer cell lines; expression associated with progression to androgen insensitive phenotype. Expressed in normal testis and at lower level in normal placenta.</text>
</comment>
<comment type="miscellaneous">
    <text>This gene belongs to a multigene family expressed in a large variety of tumors whereas in normal tissues, expression is restricted to germ cells. These genes organized in clustered repeats, have a high degree of predicted sequence identity, but differ by scattered single nucleotide substitution. Their sequences contain either the antigenic peptide YYWPRPRRY or YRPRPRRY which is recognized by cytotoxic T-cells.</text>
</comment>
<comment type="similarity">
    <text evidence="3">Belongs to the GAGE family.</text>
</comment>
<comment type="caution">
    <text evidence="3">The first GAGE nomenclature was based on identified mRNA sequences, but the high identity of the GAGE members made impossible to separate products of paralogous genes from polymorph products. PubMed:18179644 presented a new GAGE gene nomenclature based on the identified genes and their products.</text>
</comment>
<name>PAGE1_HUMAN</name>
<keyword id="KW-0597">Phosphoprotein</keyword>
<keyword id="KW-1267">Proteomics identification</keyword>
<keyword id="KW-1185">Reference proteome</keyword>